<evidence type="ECO:0000255" key="1">
    <source>
        <dbReference type="HAMAP-Rule" id="MF_01325"/>
    </source>
</evidence>
<evidence type="ECO:0000256" key="2">
    <source>
        <dbReference type="SAM" id="MobiDB-lite"/>
    </source>
</evidence>
<evidence type="ECO:0000305" key="3"/>
<dbReference type="EMBL" id="CP000103">
    <property type="protein sequence ID" value="ABB74074.1"/>
    <property type="molecule type" value="Genomic_DNA"/>
</dbReference>
<dbReference type="RefSeq" id="WP_011380123.1">
    <property type="nucleotide sequence ID" value="NC_007614.1"/>
</dbReference>
<dbReference type="SMR" id="Q2YAZ7"/>
<dbReference type="STRING" id="323848.Nmul_A0767"/>
<dbReference type="KEGG" id="nmu:Nmul_A0767"/>
<dbReference type="eggNOG" id="COG0087">
    <property type="taxonomic scope" value="Bacteria"/>
</dbReference>
<dbReference type="HOGENOM" id="CLU_044142_4_1_4"/>
<dbReference type="OrthoDB" id="9806135at2"/>
<dbReference type="Proteomes" id="UP000002718">
    <property type="component" value="Chromosome"/>
</dbReference>
<dbReference type="GO" id="GO:0022625">
    <property type="term" value="C:cytosolic large ribosomal subunit"/>
    <property type="evidence" value="ECO:0007669"/>
    <property type="project" value="TreeGrafter"/>
</dbReference>
<dbReference type="GO" id="GO:0019843">
    <property type="term" value="F:rRNA binding"/>
    <property type="evidence" value="ECO:0007669"/>
    <property type="project" value="UniProtKB-UniRule"/>
</dbReference>
<dbReference type="GO" id="GO:0003735">
    <property type="term" value="F:structural constituent of ribosome"/>
    <property type="evidence" value="ECO:0007669"/>
    <property type="project" value="InterPro"/>
</dbReference>
<dbReference type="GO" id="GO:0006412">
    <property type="term" value="P:translation"/>
    <property type="evidence" value="ECO:0007669"/>
    <property type="project" value="UniProtKB-UniRule"/>
</dbReference>
<dbReference type="FunFam" id="2.40.30.10:FF:000004">
    <property type="entry name" value="50S ribosomal protein L3"/>
    <property type="match status" value="1"/>
</dbReference>
<dbReference type="FunFam" id="3.30.160.810:FF:000001">
    <property type="entry name" value="50S ribosomal protein L3"/>
    <property type="match status" value="1"/>
</dbReference>
<dbReference type="Gene3D" id="3.30.160.810">
    <property type="match status" value="1"/>
</dbReference>
<dbReference type="Gene3D" id="2.40.30.10">
    <property type="entry name" value="Translation factors"/>
    <property type="match status" value="1"/>
</dbReference>
<dbReference type="HAMAP" id="MF_01325_B">
    <property type="entry name" value="Ribosomal_uL3_B"/>
    <property type="match status" value="1"/>
</dbReference>
<dbReference type="InterPro" id="IPR000597">
    <property type="entry name" value="Ribosomal_uL3"/>
</dbReference>
<dbReference type="InterPro" id="IPR019927">
    <property type="entry name" value="Ribosomal_uL3_bac/org-type"/>
</dbReference>
<dbReference type="InterPro" id="IPR019926">
    <property type="entry name" value="Ribosomal_uL3_CS"/>
</dbReference>
<dbReference type="InterPro" id="IPR009000">
    <property type="entry name" value="Transl_B-barrel_sf"/>
</dbReference>
<dbReference type="NCBIfam" id="TIGR03625">
    <property type="entry name" value="L3_bact"/>
    <property type="match status" value="1"/>
</dbReference>
<dbReference type="PANTHER" id="PTHR11229">
    <property type="entry name" value="50S RIBOSOMAL PROTEIN L3"/>
    <property type="match status" value="1"/>
</dbReference>
<dbReference type="PANTHER" id="PTHR11229:SF16">
    <property type="entry name" value="LARGE RIBOSOMAL SUBUNIT PROTEIN UL3C"/>
    <property type="match status" value="1"/>
</dbReference>
<dbReference type="Pfam" id="PF00297">
    <property type="entry name" value="Ribosomal_L3"/>
    <property type="match status" value="1"/>
</dbReference>
<dbReference type="SUPFAM" id="SSF50447">
    <property type="entry name" value="Translation proteins"/>
    <property type="match status" value="1"/>
</dbReference>
<dbReference type="PROSITE" id="PS00474">
    <property type="entry name" value="RIBOSOMAL_L3"/>
    <property type="match status" value="1"/>
</dbReference>
<reference key="1">
    <citation type="submission" date="2005-08" db="EMBL/GenBank/DDBJ databases">
        <title>Complete sequence of chromosome 1 of Nitrosospira multiformis ATCC 25196.</title>
        <authorList>
            <person name="Copeland A."/>
            <person name="Lucas S."/>
            <person name="Lapidus A."/>
            <person name="Barry K."/>
            <person name="Detter J.C."/>
            <person name="Glavina T."/>
            <person name="Hammon N."/>
            <person name="Israni S."/>
            <person name="Pitluck S."/>
            <person name="Chain P."/>
            <person name="Malfatti S."/>
            <person name="Shin M."/>
            <person name="Vergez L."/>
            <person name="Schmutz J."/>
            <person name="Larimer F."/>
            <person name="Land M."/>
            <person name="Hauser L."/>
            <person name="Kyrpides N."/>
            <person name="Lykidis A."/>
            <person name="Richardson P."/>
        </authorList>
    </citation>
    <scope>NUCLEOTIDE SEQUENCE [LARGE SCALE GENOMIC DNA]</scope>
    <source>
        <strain>ATCC 25196 / NCIMB 11849 / C 71</strain>
    </source>
</reference>
<name>RL3_NITMU</name>
<comment type="function">
    <text evidence="1">One of the primary rRNA binding proteins, it binds directly near the 3'-end of the 23S rRNA, where it nucleates assembly of the 50S subunit.</text>
</comment>
<comment type="subunit">
    <text evidence="1">Part of the 50S ribosomal subunit. Forms a cluster with proteins L14 and L19.</text>
</comment>
<comment type="PTM">
    <text evidence="1">Methylated by PrmB.</text>
</comment>
<comment type="similarity">
    <text evidence="1">Belongs to the universal ribosomal protein uL3 family.</text>
</comment>
<accession>Q2YAZ7</accession>
<keyword id="KW-0488">Methylation</keyword>
<keyword id="KW-1185">Reference proteome</keyword>
<keyword id="KW-0687">Ribonucleoprotein</keyword>
<keyword id="KW-0689">Ribosomal protein</keyword>
<keyword id="KW-0694">RNA-binding</keyword>
<keyword id="KW-0699">rRNA-binding</keyword>
<organism>
    <name type="scientific">Nitrosospira multiformis (strain ATCC 25196 / NCIMB 11849 / C 71)</name>
    <dbReference type="NCBI Taxonomy" id="323848"/>
    <lineage>
        <taxon>Bacteria</taxon>
        <taxon>Pseudomonadati</taxon>
        <taxon>Pseudomonadota</taxon>
        <taxon>Betaproteobacteria</taxon>
        <taxon>Nitrosomonadales</taxon>
        <taxon>Nitrosomonadaceae</taxon>
        <taxon>Nitrosospira</taxon>
    </lineage>
</organism>
<sequence>MSLGLVGRKVGMTRIFTEEGDSQPVTVLDVSNNRVTQIKTPATDGYSAVQVTFGKRRAIRVNKPSAGHFAKAAVEAGEILREFRVAEEILGTLSPGTVIGLDIFQPGQRVDVTGTSIGKGYAGAIKRHGFASNRASHGNSRSHNVPGSIGMAQDPGRVFPGKRMTGHLGNVRRTIQNLEILRIDAERGLLIIKGAIPGSKGGDVTVSPSIRSARPTNNGNVNAAAKGGAKSGKKGG</sequence>
<gene>
    <name evidence="1" type="primary">rplC</name>
    <name type="ordered locus">Nmul_A0767</name>
</gene>
<protein>
    <recommendedName>
        <fullName evidence="1">Large ribosomal subunit protein uL3</fullName>
    </recommendedName>
    <alternativeName>
        <fullName evidence="3">50S ribosomal protein L3</fullName>
    </alternativeName>
</protein>
<proteinExistence type="inferred from homology"/>
<feature type="chain" id="PRO_0000241377" description="Large ribosomal subunit protein uL3">
    <location>
        <begin position="1"/>
        <end position="236"/>
    </location>
</feature>
<feature type="region of interest" description="Disordered" evidence="2">
    <location>
        <begin position="132"/>
        <end position="153"/>
    </location>
</feature>
<feature type="region of interest" description="Disordered" evidence="2">
    <location>
        <begin position="200"/>
        <end position="236"/>
    </location>
</feature>
<feature type="compositionally biased region" description="Polar residues" evidence="2">
    <location>
        <begin position="133"/>
        <end position="145"/>
    </location>
</feature>
<feature type="compositionally biased region" description="Polar residues" evidence="2">
    <location>
        <begin position="206"/>
        <end position="216"/>
    </location>
</feature>
<feature type="compositionally biased region" description="Low complexity" evidence="2">
    <location>
        <begin position="217"/>
        <end position="228"/>
    </location>
</feature>
<feature type="modified residue" description="N5-methylglutamine" evidence="1">
    <location>
        <position position="153"/>
    </location>
</feature>